<comment type="function">
    <text evidence="1">Component of SCF(ASK-cullin-F-box) E3 ubiquitin ligase complexes, which may mediate the ubiquitination and subsequent proteasomal degradation of target proteins. Negative regulator of the phyA signaling pathway that shifts the responsiveness of the phyA signaling system associated with hypocotyl elongation from red to far-red wavelength.</text>
</comment>
<comment type="pathway">
    <text>Protein modification; protein ubiquitination.</text>
</comment>
<comment type="subunit">
    <text evidence="2 3">Probable component of an E3 ubiquitin ligase SCF complex. Interacts with SKP1A/ASK1 and SKP1B/ASK2.</text>
</comment>
<comment type="interaction">
    <interactant intactId="EBI-687388">
        <id>Q8LEA8</id>
    </interactant>
    <interactant intactId="EBI-401185">
        <id>O49484</id>
        <label>ASK11</label>
    </interactant>
    <organismsDiffer>false</organismsDiffer>
    <experiments>3</experiments>
</comment>
<comment type="interaction">
    <interactant intactId="EBI-687388">
        <id>Q8LEA8</id>
    </interactant>
    <interactant intactId="EBI-401221">
        <id>O81057</id>
        <label>ASK14</label>
    </interactant>
    <organismsDiffer>false</organismsDiffer>
    <experiments>3</experiments>
</comment>
<comment type="interaction">
    <interactant intactId="EBI-687388">
        <id>Q8LEA8</id>
    </interactant>
    <interactant intactId="EBI-604085">
        <id>Q9LNT9</id>
        <label>ASK4</label>
    </interactant>
    <organismsDiffer>false</organismsDiffer>
    <experiments>4</experiments>
</comment>
<comment type="interaction">
    <interactant intactId="EBI-687388">
        <id>Q8LEA8</id>
    </interactant>
    <interactant intactId="EBI-532357">
        <id>Q39255</id>
        <label>SKP1A</label>
    </interactant>
    <organismsDiffer>false</organismsDiffer>
    <experiments>4</experiments>
</comment>
<comment type="interaction">
    <interactant intactId="EBI-687388">
        <id>Q8LEA8</id>
    </interactant>
    <interactant intactId="EBI-604076">
        <id>Q9FHW7</id>
        <label>SKP1B</label>
    </interactant>
    <organismsDiffer>false</organismsDiffer>
    <experiments>4</experiments>
</comment>
<comment type="subcellular location">
    <subcellularLocation>
        <location evidence="2">Nucleus</location>
    </subcellularLocation>
</comment>
<comment type="domain">
    <text evidence="2">The F-box domain is required for the interaction with SKP1A and SKP1B.</text>
</comment>
<comment type="miscellaneous">
    <text>'Empfindlicher im dunkelroten licht' means sensitive to far-red light in German.</text>
</comment>
<name>EID1_ARATH</name>
<accession>Q8LEA8</accession>
<accession>O81289</accession>
<accession>Q0WMI9</accession>
<proteinExistence type="evidence at protein level"/>
<dbReference type="EMBL" id="AF069298">
    <property type="protein sequence ID" value="AAC19270.1"/>
    <property type="molecule type" value="Genomic_DNA"/>
</dbReference>
<dbReference type="EMBL" id="AL161494">
    <property type="protein sequence ID" value="CAB80737.1"/>
    <property type="molecule type" value="Genomic_DNA"/>
</dbReference>
<dbReference type="EMBL" id="CP002687">
    <property type="protein sequence ID" value="AEE82172.1"/>
    <property type="molecule type" value="Genomic_DNA"/>
</dbReference>
<dbReference type="EMBL" id="BT002038">
    <property type="protein sequence ID" value="AAN72049.1"/>
    <property type="molecule type" value="mRNA"/>
</dbReference>
<dbReference type="EMBL" id="BT008731">
    <property type="protein sequence ID" value="AAP42744.1"/>
    <property type="molecule type" value="mRNA"/>
</dbReference>
<dbReference type="EMBL" id="AK229833">
    <property type="protein sequence ID" value="BAF01662.1"/>
    <property type="molecule type" value="mRNA"/>
</dbReference>
<dbReference type="EMBL" id="AY085530">
    <property type="protein sequence ID" value="AAM62754.1"/>
    <property type="molecule type" value="mRNA"/>
</dbReference>
<dbReference type="PIR" id="T01306">
    <property type="entry name" value="T01306"/>
</dbReference>
<dbReference type="RefSeq" id="NP_192153.1">
    <property type="nucleotide sequence ID" value="NM_116477.1"/>
</dbReference>
<dbReference type="BioGRID" id="13299">
    <property type="interactions" value="11"/>
</dbReference>
<dbReference type="FunCoup" id="Q8LEA8">
    <property type="interactions" value="1036"/>
</dbReference>
<dbReference type="IntAct" id="Q8LEA8">
    <property type="interactions" value="9"/>
</dbReference>
<dbReference type="STRING" id="3702.Q8LEA8"/>
<dbReference type="PaxDb" id="3702-AT4G02440.1"/>
<dbReference type="ProteomicsDB" id="220758"/>
<dbReference type="EnsemblPlants" id="AT4G02440.1">
    <property type="protein sequence ID" value="AT4G02440.1"/>
    <property type="gene ID" value="AT4G02440"/>
</dbReference>
<dbReference type="GeneID" id="828008"/>
<dbReference type="Gramene" id="AT4G02440.1">
    <property type="protein sequence ID" value="AT4G02440.1"/>
    <property type="gene ID" value="AT4G02440"/>
</dbReference>
<dbReference type="KEGG" id="ath:AT4G02440"/>
<dbReference type="Araport" id="AT4G02440"/>
<dbReference type="TAIR" id="AT4G02440">
    <property type="gene designation" value="EID1"/>
</dbReference>
<dbReference type="eggNOG" id="ENOG502QQ62">
    <property type="taxonomic scope" value="Eukaryota"/>
</dbReference>
<dbReference type="HOGENOM" id="CLU_049819_0_0_1"/>
<dbReference type="InParanoid" id="Q8LEA8"/>
<dbReference type="OMA" id="RNVCCKT"/>
<dbReference type="PhylomeDB" id="Q8LEA8"/>
<dbReference type="UniPathway" id="UPA00143"/>
<dbReference type="PRO" id="PR:Q8LEA8"/>
<dbReference type="Proteomes" id="UP000006548">
    <property type="component" value="Chromosome 4"/>
</dbReference>
<dbReference type="ExpressionAtlas" id="Q8LEA8">
    <property type="expression patterns" value="baseline and differential"/>
</dbReference>
<dbReference type="GO" id="GO:0005634">
    <property type="term" value="C:nucleus"/>
    <property type="evidence" value="ECO:0000314"/>
    <property type="project" value="TAIR"/>
</dbReference>
<dbReference type="GO" id="GO:0004842">
    <property type="term" value="F:ubiquitin-protein transferase activity"/>
    <property type="evidence" value="ECO:0000250"/>
    <property type="project" value="TAIR"/>
</dbReference>
<dbReference type="GO" id="GO:0048366">
    <property type="term" value="P:leaf development"/>
    <property type="evidence" value="ECO:0000315"/>
    <property type="project" value="TAIR"/>
</dbReference>
<dbReference type="GO" id="GO:0048573">
    <property type="term" value="P:photoperiodism, flowering"/>
    <property type="evidence" value="ECO:0000315"/>
    <property type="project" value="TAIR"/>
</dbReference>
<dbReference type="GO" id="GO:0016567">
    <property type="term" value="P:protein ubiquitination"/>
    <property type="evidence" value="ECO:0007669"/>
    <property type="project" value="UniProtKB-UniPathway"/>
</dbReference>
<dbReference type="GO" id="GO:0009585">
    <property type="term" value="P:red, far-red light phototransduction"/>
    <property type="evidence" value="ECO:0000315"/>
    <property type="project" value="TAIR"/>
</dbReference>
<dbReference type="GO" id="GO:0010099">
    <property type="term" value="P:regulation of photomorphogenesis"/>
    <property type="evidence" value="ECO:0000315"/>
    <property type="project" value="TAIR"/>
</dbReference>
<dbReference type="InterPro" id="IPR040267">
    <property type="entry name" value="EID1-like"/>
</dbReference>
<dbReference type="InterPro" id="IPR036047">
    <property type="entry name" value="F-box-like_dom_sf"/>
</dbReference>
<dbReference type="InterPro" id="IPR001810">
    <property type="entry name" value="F-box_dom"/>
</dbReference>
<dbReference type="PANTHER" id="PTHR31348">
    <property type="entry name" value="EID1-LIKE F-BOX PROTEIN 2-RELATED"/>
    <property type="match status" value="1"/>
</dbReference>
<dbReference type="PANTHER" id="PTHR31348:SF4">
    <property type="entry name" value="PHYTOCHROME A-ASSOCIATED F-BOX PROTEIN"/>
    <property type="match status" value="1"/>
</dbReference>
<dbReference type="Pfam" id="PF00646">
    <property type="entry name" value="F-box"/>
    <property type="match status" value="1"/>
</dbReference>
<dbReference type="SUPFAM" id="SSF81383">
    <property type="entry name" value="F-box domain"/>
    <property type="match status" value="1"/>
</dbReference>
<gene>
    <name type="primary">EID1</name>
    <name type="ordered locus">At4g02440</name>
    <name type="ORF">T14P8.22</name>
</gene>
<protein>
    <recommendedName>
        <fullName>Phytochrome A-associated F-box protein</fullName>
    </recommendedName>
    <alternativeName>
        <fullName>Empfindlicher im dunkelroten Licht protein 1</fullName>
    </alternativeName>
</protein>
<evidence type="ECO:0000269" key="1">
    <source>
    </source>
</evidence>
<evidence type="ECO:0000269" key="2">
    <source>
    </source>
</evidence>
<evidence type="ECO:0000269" key="3">
    <source>
    </source>
</evidence>
<evidence type="ECO:0000305" key="4"/>
<sequence>MAESVFSCIPEDVVFNIFFKLQDDPRNWARLACVCTKFSSIVRNVCCKTQCYSAIPTVISDLLPLPPSAAASASSSTAADSSLTPPGGWASLYKLAVCCPGLFHAGILLENSDFGLERELGPDQNLDPKPTTTDLALNDEEVSKPVGSGLETTSFWSLYDDLYTDTIPAPPPEDSIDDQEEEIETSEIRPGRDLPVRKRRKICRSLGSHLASGGWNLSREQGNKLLASRFRGDCLYICNWPGCIHVEEKRNYMLFRGVFKDFKRSRVWRTINDGNRSKTSGLKCAFCLCDETWDLHSSFCLRRVFGFHDDGEPVVRAYVCENGHVSGAWTALPLYT</sequence>
<feature type="chain" id="PRO_0000119961" description="Phytochrome A-associated F-box protein">
    <location>
        <begin position="1"/>
        <end position="336"/>
    </location>
</feature>
<feature type="domain" description="F-box">
    <location>
        <begin position="3"/>
        <end position="55"/>
    </location>
</feature>
<feature type="short sequence motif" description="Nuclear localization signal" evidence="2">
    <location>
        <begin position="197"/>
        <end position="201"/>
    </location>
</feature>
<feature type="mutagenesis site" description="Disrupts interaction with SKP1A and SKP1B." evidence="2">
    <original>P</original>
    <variation>A</variation>
    <location>
        <position position="10"/>
    </location>
</feature>
<feature type="mutagenesis site" description="In eid1-2; enhances sensitivity to red and far-red light." evidence="2">
    <original>G</original>
    <variation>C</variation>
    <location>
        <position position="101"/>
    </location>
</feature>
<feature type="mutagenesis site" description="Cytoplasmic localization instead of nuclear." evidence="2">
    <original>RK</original>
    <variation>SE</variation>
    <location>
        <begin position="197"/>
        <end position="198"/>
    </location>
</feature>
<feature type="sequence conflict" description="In Ref. 5; AAM62754." evidence="4" ref="5">
    <original>N</original>
    <variation>K</variation>
    <location>
        <position position="16"/>
    </location>
</feature>
<feature type="sequence conflict" description="In Ref. 5; AAM62754." evidence="4" ref="5">
    <original>A</original>
    <variation>AA</variation>
    <location>
        <position position="71"/>
    </location>
</feature>
<organism>
    <name type="scientific">Arabidopsis thaliana</name>
    <name type="common">Mouse-ear cress</name>
    <dbReference type="NCBI Taxonomy" id="3702"/>
    <lineage>
        <taxon>Eukaryota</taxon>
        <taxon>Viridiplantae</taxon>
        <taxon>Streptophyta</taxon>
        <taxon>Embryophyta</taxon>
        <taxon>Tracheophyta</taxon>
        <taxon>Spermatophyta</taxon>
        <taxon>Magnoliopsida</taxon>
        <taxon>eudicotyledons</taxon>
        <taxon>Gunneridae</taxon>
        <taxon>Pentapetalae</taxon>
        <taxon>rosids</taxon>
        <taxon>malvids</taxon>
        <taxon>Brassicales</taxon>
        <taxon>Brassicaceae</taxon>
        <taxon>Camelineae</taxon>
        <taxon>Arabidopsis</taxon>
    </lineage>
</organism>
<reference key="1">
    <citation type="journal article" date="1999" name="Nature">
        <title>Sequence and analysis of chromosome 4 of the plant Arabidopsis thaliana.</title>
        <authorList>
            <person name="Mayer K.F.X."/>
            <person name="Schueller C."/>
            <person name="Wambutt R."/>
            <person name="Murphy G."/>
            <person name="Volckaert G."/>
            <person name="Pohl T."/>
            <person name="Duesterhoeft A."/>
            <person name="Stiekema W."/>
            <person name="Entian K.-D."/>
            <person name="Terryn N."/>
            <person name="Harris B."/>
            <person name="Ansorge W."/>
            <person name="Brandt P."/>
            <person name="Grivell L.A."/>
            <person name="Rieger M."/>
            <person name="Weichselgartner M."/>
            <person name="de Simone V."/>
            <person name="Obermaier B."/>
            <person name="Mache R."/>
            <person name="Mueller M."/>
            <person name="Kreis M."/>
            <person name="Delseny M."/>
            <person name="Puigdomenech P."/>
            <person name="Watson M."/>
            <person name="Schmidtheini T."/>
            <person name="Reichert B."/>
            <person name="Portetelle D."/>
            <person name="Perez-Alonso M."/>
            <person name="Boutry M."/>
            <person name="Bancroft I."/>
            <person name="Vos P."/>
            <person name="Hoheisel J."/>
            <person name="Zimmermann W."/>
            <person name="Wedler H."/>
            <person name="Ridley P."/>
            <person name="Langham S.-A."/>
            <person name="McCullagh B."/>
            <person name="Bilham L."/>
            <person name="Robben J."/>
            <person name="van der Schueren J."/>
            <person name="Grymonprez B."/>
            <person name="Chuang Y.-J."/>
            <person name="Vandenbussche F."/>
            <person name="Braeken M."/>
            <person name="Weltjens I."/>
            <person name="Voet M."/>
            <person name="Bastiaens I."/>
            <person name="Aert R."/>
            <person name="Defoor E."/>
            <person name="Weitzenegger T."/>
            <person name="Bothe G."/>
            <person name="Ramsperger U."/>
            <person name="Hilbert H."/>
            <person name="Braun M."/>
            <person name="Holzer E."/>
            <person name="Brandt A."/>
            <person name="Peters S."/>
            <person name="van Staveren M."/>
            <person name="Dirkse W."/>
            <person name="Mooijman P."/>
            <person name="Klein Lankhorst R."/>
            <person name="Rose M."/>
            <person name="Hauf J."/>
            <person name="Koetter P."/>
            <person name="Berneiser S."/>
            <person name="Hempel S."/>
            <person name="Feldpausch M."/>
            <person name="Lamberth S."/>
            <person name="Van den Daele H."/>
            <person name="De Keyser A."/>
            <person name="Buysshaert C."/>
            <person name="Gielen J."/>
            <person name="Villarroel R."/>
            <person name="De Clercq R."/>
            <person name="van Montagu M."/>
            <person name="Rogers J."/>
            <person name="Cronin A."/>
            <person name="Quail M.A."/>
            <person name="Bray-Allen S."/>
            <person name="Clark L."/>
            <person name="Doggett J."/>
            <person name="Hall S."/>
            <person name="Kay M."/>
            <person name="Lennard N."/>
            <person name="McLay K."/>
            <person name="Mayes R."/>
            <person name="Pettett A."/>
            <person name="Rajandream M.A."/>
            <person name="Lyne M."/>
            <person name="Benes V."/>
            <person name="Rechmann S."/>
            <person name="Borkova D."/>
            <person name="Bloecker H."/>
            <person name="Scharfe M."/>
            <person name="Grimm M."/>
            <person name="Loehnert T.-H."/>
            <person name="Dose S."/>
            <person name="de Haan M."/>
            <person name="Maarse A.C."/>
            <person name="Schaefer M."/>
            <person name="Mueller-Auer S."/>
            <person name="Gabel C."/>
            <person name="Fuchs M."/>
            <person name="Fartmann B."/>
            <person name="Granderath K."/>
            <person name="Dauner D."/>
            <person name="Herzl A."/>
            <person name="Neumann S."/>
            <person name="Argiriou A."/>
            <person name="Vitale D."/>
            <person name="Liguori R."/>
            <person name="Piravandi E."/>
            <person name="Massenet O."/>
            <person name="Quigley F."/>
            <person name="Clabauld G."/>
            <person name="Muendlein A."/>
            <person name="Felber R."/>
            <person name="Schnabl S."/>
            <person name="Hiller R."/>
            <person name="Schmidt W."/>
            <person name="Lecharny A."/>
            <person name="Aubourg S."/>
            <person name="Chefdor F."/>
            <person name="Cooke R."/>
            <person name="Berger C."/>
            <person name="Monfort A."/>
            <person name="Casacuberta E."/>
            <person name="Gibbons T."/>
            <person name="Weber N."/>
            <person name="Vandenbol M."/>
            <person name="Bargues M."/>
            <person name="Terol J."/>
            <person name="Torres A."/>
            <person name="Perez-Perez A."/>
            <person name="Purnelle B."/>
            <person name="Bent E."/>
            <person name="Johnson S."/>
            <person name="Tacon D."/>
            <person name="Jesse T."/>
            <person name="Heijnen L."/>
            <person name="Schwarz S."/>
            <person name="Scholler P."/>
            <person name="Heber S."/>
            <person name="Francs P."/>
            <person name="Bielke C."/>
            <person name="Frishman D."/>
            <person name="Haase D."/>
            <person name="Lemcke K."/>
            <person name="Mewes H.-W."/>
            <person name="Stocker S."/>
            <person name="Zaccaria P."/>
            <person name="Bevan M."/>
            <person name="Wilson R.K."/>
            <person name="de la Bastide M."/>
            <person name="Habermann K."/>
            <person name="Parnell L."/>
            <person name="Dedhia N."/>
            <person name="Gnoj L."/>
            <person name="Schutz K."/>
            <person name="Huang E."/>
            <person name="Spiegel L."/>
            <person name="Sekhon M."/>
            <person name="Murray J."/>
            <person name="Sheet P."/>
            <person name="Cordes M."/>
            <person name="Abu-Threideh J."/>
            <person name="Stoneking T."/>
            <person name="Kalicki J."/>
            <person name="Graves T."/>
            <person name="Harmon G."/>
            <person name="Edwards J."/>
            <person name="Latreille P."/>
            <person name="Courtney L."/>
            <person name="Cloud J."/>
            <person name="Abbott A."/>
            <person name="Scott K."/>
            <person name="Johnson D."/>
            <person name="Minx P."/>
            <person name="Bentley D."/>
            <person name="Fulton B."/>
            <person name="Miller N."/>
            <person name="Greco T."/>
            <person name="Kemp K."/>
            <person name="Kramer J."/>
            <person name="Fulton L."/>
            <person name="Mardis E."/>
            <person name="Dante M."/>
            <person name="Pepin K."/>
            <person name="Hillier L.W."/>
            <person name="Nelson J."/>
            <person name="Spieth J."/>
            <person name="Ryan E."/>
            <person name="Andrews S."/>
            <person name="Geisel C."/>
            <person name="Layman D."/>
            <person name="Du H."/>
            <person name="Ali J."/>
            <person name="Berghoff A."/>
            <person name="Jones K."/>
            <person name="Drone K."/>
            <person name="Cotton M."/>
            <person name="Joshu C."/>
            <person name="Antonoiu B."/>
            <person name="Zidanic M."/>
            <person name="Strong C."/>
            <person name="Sun H."/>
            <person name="Lamar B."/>
            <person name="Yordan C."/>
            <person name="Ma P."/>
            <person name="Zhong J."/>
            <person name="Preston R."/>
            <person name="Vil D."/>
            <person name="Shekher M."/>
            <person name="Matero A."/>
            <person name="Shah R."/>
            <person name="Swaby I.K."/>
            <person name="O'Shaughnessy A."/>
            <person name="Rodriguez M."/>
            <person name="Hoffman J."/>
            <person name="Till S."/>
            <person name="Granat S."/>
            <person name="Shohdy N."/>
            <person name="Hasegawa A."/>
            <person name="Hameed A."/>
            <person name="Lodhi M."/>
            <person name="Johnson A."/>
            <person name="Chen E."/>
            <person name="Marra M.A."/>
            <person name="Martienssen R."/>
            <person name="McCombie W.R."/>
        </authorList>
    </citation>
    <scope>NUCLEOTIDE SEQUENCE [LARGE SCALE GENOMIC DNA]</scope>
    <source>
        <strain>cv. Columbia</strain>
    </source>
</reference>
<reference key="2">
    <citation type="journal article" date="2017" name="Plant J.">
        <title>Araport11: a complete reannotation of the Arabidopsis thaliana reference genome.</title>
        <authorList>
            <person name="Cheng C.Y."/>
            <person name="Krishnakumar V."/>
            <person name="Chan A.P."/>
            <person name="Thibaud-Nissen F."/>
            <person name="Schobel S."/>
            <person name="Town C.D."/>
        </authorList>
    </citation>
    <scope>GENOME REANNOTATION</scope>
    <source>
        <strain>cv. Columbia</strain>
    </source>
</reference>
<reference key="3">
    <citation type="journal article" date="2003" name="Science">
        <title>Empirical analysis of transcriptional activity in the Arabidopsis genome.</title>
        <authorList>
            <person name="Yamada K."/>
            <person name="Lim J."/>
            <person name="Dale J.M."/>
            <person name="Chen H."/>
            <person name="Shinn P."/>
            <person name="Palm C.J."/>
            <person name="Southwick A.M."/>
            <person name="Wu H.C."/>
            <person name="Kim C.J."/>
            <person name="Nguyen M."/>
            <person name="Pham P.K."/>
            <person name="Cheuk R.F."/>
            <person name="Karlin-Newmann G."/>
            <person name="Liu S.X."/>
            <person name="Lam B."/>
            <person name="Sakano H."/>
            <person name="Wu T."/>
            <person name="Yu G."/>
            <person name="Miranda M."/>
            <person name="Quach H.L."/>
            <person name="Tripp M."/>
            <person name="Chang C.H."/>
            <person name="Lee J.M."/>
            <person name="Toriumi M.J."/>
            <person name="Chan M.M."/>
            <person name="Tang C.C."/>
            <person name="Onodera C.S."/>
            <person name="Deng J.M."/>
            <person name="Akiyama K."/>
            <person name="Ansari Y."/>
            <person name="Arakawa T."/>
            <person name="Banh J."/>
            <person name="Banno F."/>
            <person name="Bowser L."/>
            <person name="Brooks S.Y."/>
            <person name="Carninci P."/>
            <person name="Chao Q."/>
            <person name="Choy N."/>
            <person name="Enju A."/>
            <person name="Goldsmith A.D."/>
            <person name="Gurjal M."/>
            <person name="Hansen N.F."/>
            <person name="Hayashizaki Y."/>
            <person name="Johnson-Hopson C."/>
            <person name="Hsuan V.W."/>
            <person name="Iida K."/>
            <person name="Karnes M."/>
            <person name="Khan S."/>
            <person name="Koesema E."/>
            <person name="Ishida J."/>
            <person name="Jiang P.X."/>
            <person name="Jones T."/>
            <person name="Kawai J."/>
            <person name="Kamiya A."/>
            <person name="Meyers C."/>
            <person name="Nakajima M."/>
            <person name="Narusaka M."/>
            <person name="Seki M."/>
            <person name="Sakurai T."/>
            <person name="Satou M."/>
            <person name="Tamse R."/>
            <person name="Vaysberg M."/>
            <person name="Wallender E.K."/>
            <person name="Wong C."/>
            <person name="Yamamura Y."/>
            <person name="Yuan S."/>
            <person name="Shinozaki K."/>
            <person name="Davis R.W."/>
            <person name="Theologis A."/>
            <person name="Ecker J.R."/>
        </authorList>
    </citation>
    <scope>NUCLEOTIDE SEQUENCE [LARGE SCALE MRNA]</scope>
    <source>
        <strain>cv. Columbia</strain>
    </source>
</reference>
<reference key="4">
    <citation type="submission" date="2006-07" db="EMBL/GenBank/DDBJ databases">
        <title>Large-scale analysis of RIKEN Arabidopsis full-length (RAFL) cDNAs.</title>
        <authorList>
            <person name="Totoki Y."/>
            <person name="Seki M."/>
            <person name="Ishida J."/>
            <person name="Nakajima M."/>
            <person name="Enju A."/>
            <person name="Kamiya A."/>
            <person name="Narusaka M."/>
            <person name="Shin-i T."/>
            <person name="Nakagawa M."/>
            <person name="Sakamoto N."/>
            <person name="Oishi K."/>
            <person name="Kohara Y."/>
            <person name="Kobayashi M."/>
            <person name="Toyoda A."/>
            <person name="Sakaki Y."/>
            <person name="Sakurai T."/>
            <person name="Iida K."/>
            <person name="Akiyama K."/>
            <person name="Satou M."/>
            <person name="Toyoda T."/>
            <person name="Konagaya A."/>
            <person name="Carninci P."/>
            <person name="Kawai J."/>
            <person name="Hayashizaki Y."/>
            <person name="Shinozaki K."/>
        </authorList>
    </citation>
    <scope>NUCLEOTIDE SEQUENCE [LARGE SCALE MRNA]</scope>
    <source>
        <strain>cv. Columbia</strain>
    </source>
</reference>
<reference key="5">
    <citation type="submission" date="2002-03" db="EMBL/GenBank/DDBJ databases">
        <title>Full-length cDNA from Arabidopsis thaliana.</title>
        <authorList>
            <person name="Brover V.V."/>
            <person name="Troukhan M.E."/>
            <person name="Alexandrov N.A."/>
            <person name="Lu Y.-P."/>
            <person name="Flavell R.B."/>
            <person name="Feldmann K.A."/>
        </authorList>
    </citation>
    <scope>NUCLEOTIDE SEQUENCE [LARGE SCALE MRNA]</scope>
</reference>
<reference key="6">
    <citation type="journal article" date="2000" name="Plant Cell">
        <title>eid1: a new Arabidopsis mutant hypersensitive in phytochrome A-dependent high-irradiance responses.</title>
        <authorList>
            <person name="Bueche C."/>
            <person name="Poppe C."/>
            <person name="Schaefer E."/>
            <person name="Kretsch T."/>
        </authorList>
    </citation>
    <scope>FUNCTION</scope>
</reference>
<reference key="7">
    <citation type="journal article" date="2001" name="Genes Dev.">
        <title>EID1, an F-box protein involved in phytochrome A-specific light signaling.</title>
        <authorList>
            <person name="Dieterle M."/>
            <person name="Zhou Y.-C."/>
            <person name="Schaefer E."/>
            <person name="Funk M."/>
            <person name="Kretsch T."/>
        </authorList>
    </citation>
    <scope>SUBCELLULAR LOCATION</scope>
    <scope>NUCLEAR LOCALIZATION SIGNAL</scope>
    <scope>INTERACTION WITH SKP1A AND SKP1B</scope>
    <scope>DOMAIN</scope>
    <scope>MUTAGENESIS OF PRO-10; GLY-101 AND 197-ARG-LYS-198</scope>
</reference>
<reference key="8">
    <citation type="journal article" date="2003" name="Plant J.">
        <title>Protein interaction analysis of SCF ubiquitin E3 ligase subunits from Arabidopsis.</title>
        <authorList>
            <person name="Risseeuw E.P."/>
            <person name="Daskalchuk T.E."/>
            <person name="Banks T.W."/>
            <person name="Liu E."/>
            <person name="Cotelesage J."/>
            <person name="Hellmann H."/>
            <person name="Estelle M."/>
            <person name="Somers D.E."/>
            <person name="Crosby W.L."/>
        </authorList>
    </citation>
    <scope>INTERACTION WITH SKP1A/ASK1 AND SPK1B/ASK2</scope>
</reference>
<keyword id="KW-0539">Nucleus</keyword>
<keyword id="KW-0607">Phytochrome signaling pathway</keyword>
<keyword id="KW-1185">Reference proteome</keyword>
<keyword id="KW-0833">Ubl conjugation pathway</keyword>